<comment type="function">
    <text evidence="1">Synthesizes alpha-1,4-glucan chains using ADP-glucose.</text>
</comment>
<comment type="catalytic activity">
    <reaction evidence="1">
        <text>[(1-&gt;4)-alpha-D-glucosyl](n) + ADP-alpha-D-glucose = [(1-&gt;4)-alpha-D-glucosyl](n+1) + ADP + H(+)</text>
        <dbReference type="Rhea" id="RHEA:18189"/>
        <dbReference type="Rhea" id="RHEA-COMP:9584"/>
        <dbReference type="Rhea" id="RHEA-COMP:9587"/>
        <dbReference type="ChEBI" id="CHEBI:15378"/>
        <dbReference type="ChEBI" id="CHEBI:15444"/>
        <dbReference type="ChEBI" id="CHEBI:57498"/>
        <dbReference type="ChEBI" id="CHEBI:456216"/>
        <dbReference type="EC" id="2.4.1.21"/>
    </reaction>
</comment>
<comment type="pathway">
    <text evidence="1">Glycan biosynthesis; glycogen biosynthesis.</text>
</comment>
<comment type="similarity">
    <text evidence="1">Belongs to the glycosyltransferase 1 family. Bacterial/plant glycogen synthase subfamily.</text>
</comment>
<organism>
    <name type="scientific">Streptococcus pneumoniae (strain P1031)</name>
    <dbReference type="NCBI Taxonomy" id="488223"/>
    <lineage>
        <taxon>Bacteria</taxon>
        <taxon>Bacillati</taxon>
        <taxon>Bacillota</taxon>
        <taxon>Bacilli</taxon>
        <taxon>Lactobacillales</taxon>
        <taxon>Streptococcaceae</taxon>
        <taxon>Streptococcus</taxon>
    </lineage>
</organism>
<protein>
    <recommendedName>
        <fullName evidence="1">Glycogen synthase</fullName>
        <ecNumber evidence="1">2.4.1.21</ecNumber>
    </recommendedName>
    <alternativeName>
        <fullName evidence="1">Starch [bacterial glycogen] synthase</fullName>
    </alternativeName>
</protein>
<gene>
    <name evidence="1" type="primary">glgA</name>
    <name type="ordered locus">SPP_1129</name>
</gene>
<accession>C1CKI7</accession>
<reference key="1">
    <citation type="journal article" date="2010" name="Genome Biol.">
        <title>Structure and dynamics of the pan-genome of Streptococcus pneumoniae and closely related species.</title>
        <authorList>
            <person name="Donati C."/>
            <person name="Hiller N.L."/>
            <person name="Tettelin H."/>
            <person name="Muzzi A."/>
            <person name="Croucher N.J."/>
            <person name="Angiuoli S.V."/>
            <person name="Oggioni M."/>
            <person name="Dunning Hotopp J.C."/>
            <person name="Hu F.Z."/>
            <person name="Riley D.R."/>
            <person name="Covacci A."/>
            <person name="Mitchell T.J."/>
            <person name="Bentley S.D."/>
            <person name="Kilian M."/>
            <person name="Ehrlich G.D."/>
            <person name="Rappuoli R."/>
            <person name="Moxon E.R."/>
            <person name="Masignani V."/>
        </authorList>
    </citation>
    <scope>NUCLEOTIDE SEQUENCE [LARGE SCALE GENOMIC DNA]</scope>
    <source>
        <strain>P1031</strain>
    </source>
</reference>
<dbReference type="EC" id="2.4.1.21" evidence="1"/>
<dbReference type="EMBL" id="CP000920">
    <property type="protein sequence ID" value="ACO21805.1"/>
    <property type="molecule type" value="Genomic_DNA"/>
</dbReference>
<dbReference type="RefSeq" id="WP_000697313.1">
    <property type="nucleotide sequence ID" value="NC_012467.1"/>
</dbReference>
<dbReference type="SMR" id="C1CKI7"/>
<dbReference type="CAZy" id="GT5">
    <property type="family name" value="Glycosyltransferase Family 5"/>
</dbReference>
<dbReference type="GeneID" id="45653538"/>
<dbReference type="KEGG" id="spp:SPP_1129"/>
<dbReference type="HOGENOM" id="CLU_009583_18_2_9"/>
<dbReference type="UniPathway" id="UPA00164"/>
<dbReference type="GO" id="GO:0009011">
    <property type="term" value="F:alpha-1,4-glucan glucosyltransferase (ADP-glucose donor) activity"/>
    <property type="evidence" value="ECO:0007669"/>
    <property type="project" value="UniProtKB-UniRule"/>
</dbReference>
<dbReference type="GO" id="GO:0004373">
    <property type="term" value="F:alpha-1,4-glucan glucosyltransferase (UDP-glucose donor) activity"/>
    <property type="evidence" value="ECO:0007669"/>
    <property type="project" value="InterPro"/>
</dbReference>
<dbReference type="GO" id="GO:0005978">
    <property type="term" value="P:glycogen biosynthetic process"/>
    <property type="evidence" value="ECO:0007669"/>
    <property type="project" value="UniProtKB-UniRule"/>
</dbReference>
<dbReference type="CDD" id="cd03791">
    <property type="entry name" value="GT5_Glycogen_synthase_DULL1-like"/>
    <property type="match status" value="1"/>
</dbReference>
<dbReference type="Gene3D" id="3.40.50.2000">
    <property type="entry name" value="Glycogen Phosphorylase B"/>
    <property type="match status" value="2"/>
</dbReference>
<dbReference type="HAMAP" id="MF_00484">
    <property type="entry name" value="Glycogen_synth"/>
    <property type="match status" value="1"/>
</dbReference>
<dbReference type="InterPro" id="IPR001296">
    <property type="entry name" value="Glyco_trans_1"/>
</dbReference>
<dbReference type="InterPro" id="IPR011835">
    <property type="entry name" value="GS/SS"/>
</dbReference>
<dbReference type="InterPro" id="IPR013534">
    <property type="entry name" value="Starch_synth_cat_dom"/>
</dbReference>
<dbReference type="NCBIfam" id="TIGR02095">
    <property type="entry name" value="glgA"/>
    <property type="match status" value="1"/>
</dbReference>
<dbReference type="NCBIfam" id="NF001898">
    <property type="entry name" value="PRK00654.1-1"/>
    <property type="match status" value="1"/>
</dbReference>
<dbReference type="PANTHER" id="PTHR45825:SF11">
    <property type="entry name" value="ALPHA AMYLASE DOMAIN-CONTAINING PROTEIN"/>
    <property type="match status" value="1"/>
</dbReference>
<dbReference type="PANTHER" id="PTHR45825">
    <property type="entry name" value="GRANULE-BOUND STARCH SYNTHASE 1, CHLOROPLASTIC/AMYLOPLASTIC"/>
    <property type="match status" value="1"/>
</dbReference>
<dbReference type="Pfam" id="PF08323">
    <property type="entry name" value="Glyco_transf_5"/>
    <property type="match status" value="1"/>
</dbReference>
<dbReference type="Pfam" id="PF00534">
    <property type="entry name" value="Glycos_transf_1"/>
    <property type="match status" value="1"/>
</dbReference>
<dbReference type="SUPFAM" id="SSF53756">
    <property type="entry name" value="UDP-Glycosyltransferase/glycogen phosphorylase"/>
    <property type="match status" value="1"/>
</dbReference>
<name>GLGA_STRZP</name>
<keyword id="KW-0320">Glycogen biosynthesis</keyword>
<keyword id="KW-0328">Glycosyltransferase</keyword>
<keyword id="KW-0808">Transferase</keyword>
<feature type="chain" id="PRO_1000190087" description="Glycogen synthase">
    <location>
        <begin position="1"/>
        <end position="477"/>
    </location>
</feature>
<feature type="binding site" evidence="1">
    <location>
        <position position="15"/>
    </location>
    <ligand>
        <name>ADP-alpha-D-glucose</name>
        <dbReference type="ChEBI" id="CHEBI:57498"/>
    </ligand>
</feature>
<sequence>MKILFVAAEGAPFSKTGGLGDVIGALPKSLVKAGHEVAVILPYYDMVEAKFGSQIEDVLHFEVSVGWRRQYCGIKKTVLNGVTFYFIDNQYYFFRGHVYGDFDDGERFAFFQLAAIEAMERIDFIPDLLHVHDYHTAMIPFLLKEKYRWIQAYEDIETVLTIHNLEFQGQFSEGMLGDLFGVGFERYADGTLRWNNCLNWMKAGILYANRVSTVSPSYAHEIMTSQFGCNLDQILKMESGKVSGIVNGIDADLYNPQTDALLDYHFNQEDLSGKAKNKAKLQERVGLPVRADVPLVGIVSRLTRQKGFDVVVESLHHILQEDVQIVLLGTGDPAFEGAFSWFAQIYPDKLSTNITFDVKLAQEIYAACDLFLMPSRFEPCGLSQMMAMRYGTLPLVHEVGGLRDTVRAFNPIEGSGTGFSFDNLSPYWLNWTFQTALDLYRNHPDIWRNLQKQAMESDFSWDTACKSYLDLYHSLVN</sequence>
<proteinExistence type="inferred from homology"/>
<evidence type="ECO:0000255" key="1">
    <source>
        <dbReference type="HAMAP-Rule" id="MF_00484"/>
    </source>
</evidence>